<comment type="function">
    <text evidence="1">Participates actively in the response to hyperosmotic and heat shock by preventing the aggregation of stress-denatured proteins and by disaggregating proteins, also in an autonomous, DnaK-independent fashion. Unfolded proteins bind initially to DnaJ; upon interaction with the DnaJ-bound protein, DnaK hydrolyzes its bound ATP, resulting in the formation of a stable complex. GrpE releases ADP from DnaK; ATP binding to DnaK triggers the release of the substrate protein, thus completing the reaction cycle. Several rounds of ATP-dependent interactions between DnaJ, DnaK and GrpE are required for fully efficient folding. Also involved, together with DnaK and GrpE, in the DNA replication of plasmids through activation of initiation proteins.</text>
</comment>
<comment type="cofactor">
    <cofactor evidence="1">
        <name>Zn(2+)</name>
        <dbReference type="ChEBI" id="CHEBI:29105"/>
    </cofactor>
    <text evidence="1">Binds 2 Zn(2+) ions per monomer.</text>
</comment>
<comment type="subunit">
    <text evidence="1">Homodimer.</text>
</comment>
<comment type="subcellular location">
    <subcellularLocation>
        <location evidence="1">Cytoplasm</location>
    </subcellularLocation>
</comment>
<comment type="domain">
    <text evidence="1">The J domain is necessary and sufficient to stimulate DnaK ATPase activity. Zinc center 1 plays an important role in the autonomous, DnaK-independent chaperone activity of DnaJ. Zinc center 2 is essential for interaction with DnaK and for DnaJ activity.</text>
</comment>
<comment type="similarity">
    <text evidence="1">Belongs to the DnaJ family.</text>
</comment>
<name>DNAJ_ECTM1</name>
<gene>
    <name evidence="1" type="primary">dnaJ</name>
    <name type="ordered locus">Pmen_3623</name>
</gene>
<feature type="chain" id="PRO_1000085253" description="Chaperone protein DnaJ">
    <location>
        <begin position="1"/>
        <end position="375"/>
    </location>
</feature>
<feature type="domain" description="J" evidence="1">
    <location>
        <begin position="5"/>
        <end position="70"/>
    </location>
</feature>
<feature type="repeat" description="CXXCXGXG motif">
    <location>
        <begin position="147"/>
        <end position="154"/>
    </location>
</feature>
<feature type="repeat" description="CXXCXGXG motif">
    <location>
        <begin position="164"/>
        <end position="171"/>
    </location>
</feature>
<feature type="repeat" description="CXXCXGXG motif">
    <location>
        <begin position="186"/>
        <end position="193"/>
    </location>
</feature>
<feature type="repeat" description="CXXCXGXG motif">
    <location>
        <begin position="200"/>
        <end position="207"/>
    </location>
</feature>
<feature type="zinc finger region" description="CR-type" evidence="1">
    <location>
        <begin position="134"/>
        <end position="212"/>
    </location>
</feature>
<feature type="binding site" evidence="1">
    <location>
        <position position="147"/>
    </location>
    <ligand>
        <name>Zn(2+)</name>
        <dbReference type="ChEBI" id="CHEBI:29105"/>
        <label>1</label>
    </ligand>
</feature>
<feature type="binding site" evidence="1">
    <location>
        <position position="150"/>
    </location>
    <ligand>
        <name>Zn(2+)</name>
        <dbReference type="ChEBI" id="CHEBI:29105"/>
        <label>1</label>
    </ligand>
</feature>
<feature type="binding site" evidence="1">
    <location>
        <position position="164"/>
    </location>
    <ligand>
        <name>Zn(2+)</name>
        <dbReference type="ChEBI" id="CHEBI:29105"/>
        <label>2</label>
    </ligand>
</feature>
<feature type="binding site" evidence="1">
    <location>
        <position position="167"/>
    </location>
    <ligand>
        <name>Zn(2+)</name>
        <dbReference type="ChEBI" id="CHEBI:29105"/>
        <label>2</label>
    </ligand>
</feature>
<feature type="binding site" evidence="1">
    <location>
        <position position="186"/>
    </location>
    <ligand>
        <name>Zn(2+)</name>
        <dbReference type="ChEBI" id="CHEBI:29105"/>
        <label>2</label>
    </ligand>
</feature>
<feature type="binding site" evidence="1">
    <location>
        <position position="189"/>
    </location>
    <ligand>
        <name>Zn(2+)</name>
        <dbReference type="ChEBI" id="CHEBI:29105"/>
        <label>2</label>
    </ligand>
</feature>
<feature type="binding site" evidence="1">
    <location>
        <position position="200"/>
    </location>
    <ligand>
        <name>Zn(2+)</name>
        <dbReference type="ChEBI" id="CHEBI:29105"/>
        <label>1</label>
    </ligand>
</feature>
<feature type="binding site" evidence="1">
    <location>
        <position position="203"/>
    </location>
    <ligand>
        <name>Zn(2+)</name>
        <dbReference type="ChEBI" id="CHEBI:29105"/>
        <label>1</label>
    </ligand>
</feature>
<keyword id="KW-0143">Chaperone</keyword>
<keyword id="KW-0963">Cytoplasm</keyword>
<keyword id="KW-0235">DNA replication</keyword>
<keyword id="KW-0479">Metal-binding</keyword>
<keyword id="KW-0677">Repeat</keyword>
<keyword id="KW-0346">Stress response</keyword>
<keyword id="KW-0862">Zinc</keyword>
<keyword id="KW-0863">Zinc-finger</keyword>
<dbReference type="EMBL" id="CP000680">
    <property type="protein sequence ID" value="ABP86371.1"/>
    <property type="molecule type" value="Genomic_DNA"/>
</dbReference>
<dbReference type="SMR" id="A4XYF5"/>
<dbReference type="STRING" id="399739.Pmen_3623"/>
<dbReference type="KEGG" id="pmy:Pmen_3623"/>
<dbReference type="PATRIC" id="fig|399739.8.peg.3672"/>
<dbReference type="eggNOG" id="COG0484">
    <property type="taxonomic scope" value="Bacteria"/>
</dbReference>
<dbReference type="HOGENOM" id="CLU_017633_0_7_6"/>
<dbReference type="OrthoDB" id="9779889at2"/>
<dbReference type="GO" id="GO:0005737">
    <property type="term" value="C:cytoplasm"/>
    <property type="evidence" value="ECO:0007669"/>
    <property type="project" value="UniProtKB-SubCell"/>
</dbReference>
<dbReference type="GO" id="GO:0005524">
    <property type="term" value="F:ATP binding"/>
    <property type="evidence" value="ECO:0007669"/>
    <property type="project" value="InterPro"/>
</dbReference>
<dbReference type="GO" id="GO:0031072">
    <property type="term" value="F:heat shock protein binding"/>
    <property type="evidence" value="ECO:0007669"/>
    <property type="project" value="InterPro"/>
</dbReference>
<dbReference type="GO" id="GO:0051082">
    <property type="term" value="F:unfolded protein binding"/>
    <property type="evidence" value="ECO:0007669"/>
    <property type="project" value="UniProtKB-UniRule"/>
</dbReference>
<dbReference type="GO" id="GO:0008270">
    <property type="term" value="F:zinc ion binding"/>
    <property type="evidence" value="ECO:0007669"/>
    <property type="project" value="UniProtKB-UniRule"/>
</dbReference>
<dbReference type="GO" id="GO:0051085">
    <property type="term" value="P:chaperone cofactor-dependent protein refolding"/>
    <property type="evidence" value="ECO:0007669"/>
    <property type="project" value="TreeGrafter"/>
</dbReference>
<dbReference type="GO" id="GO:0006260">
    <property type="term" value="P:DNA replication"/>
    <property type="evidence" value="ECO:0007669"/>
    <property type="project" value="UniProtKB-KW"/>
</dbReference>
<dbReference type="GO" id="GO:0042026">
    <property type="term" value="P:protein refolding"/>
    <property type="evidence" value="ECO:0007669"/>
    <property type="project" value="TreeGrafter"/>
</dbReference>
<dbReference type="GO" id="GO:0009408">
    <property type="term" value="P:response to heat"/>
    <property type="evidence" value="ECO:0007669"/>
    <property type="project" value="InterPro"/>
</dbReference>
<dbReference type="CDD" id="cd06257">
    <property type="entry name" value="DnaJ"/>
    <property type="match status" value="1"/>
</dbReference>
<dbReference type="CDD" id="cd10747">
    <property type="entry name" value="DnaJ_C"/>
    <property type="match status" value="1"/>
</dbReference>
<dbReference type="CDD" id="cd10719">
    <property type="entry name" value="DnaJ_zf"/>
    <property type="match status" value="1"/>
</dbReference>
<dbReference type="FunFam" id="1.10.287.110:FF:000051">
    <property type="entry name" value="Molecular chaperone DnaJ"/>
    <property type="match status" value="1"/>
</dbReference>
<dbReference type="FunFam" id="2.10.230.10:FF:000002">
    <property type="entry name" value="Molecular chaperone DnaJ"/>
    <property type="match status" value="1"/>
</dbReference>
<dbReference type="FunFam" id="2.60.260.20:FF:000004">
    <property type="entry name" value="Molecular chaperone DnaJ"/>
    <property type="match status" value="1"/>
</dbReference>
<dbReference type="Gene3D" id="1.10.287.110">
    <property type="entry name" value="DnaJ domain"/>
    <property type="match status" value="1"/>
</dbReference>
<dbReference type="Gene3D" id="2.10.230.10">
    <property type="entry name" value="Heat shock protein DnaJ, cysteine-rich domain"/>
    <property type="match status" value="1"/>
</dbReference>
<dbReference type="Gene3D" id="2.60.260.20">
    <property type="entry name" value="Urease metallochaperone UreE, N-terminal domain"/>
    <property type="match status" value="2"/>
</dbReference>
<dbReference type="HAMAP" id="MF_01152">
    <property type="entry name" value="DnaJ"/>
    <property type="match status" value="1"/>
</dbReference>
<dbReference type="InterPro" id="IPR012724">
    <property type="entry name" value="DnaJ"/>
</dbReference>
<dbReference type="InterPro" id="IPR002939">
    <property type="entry name" value="DnaJ_C"/>
</dbReference>
<dbReference type="InterPro" id="IPR001623">
    <property type="entry name" value="DnaJ_domain"/>
</dbReference>
<dbReference type="InterPro" id="IPR018253">
    <property type="entry name" value="DnaJ_domain_CS"/>
</dbReference>
<dbReference type="InterPro" id="IPR008971">
    <property type="entry name" value="HSP40/DnaJ_pept-bd"/>
</dbReference>
<dbReference type="InterPro" id="IPR001305">
    <property type="entry name" value="HSP_DnaJ_Cys-rich_dom"/>
</dbReference>
<dbReference type="InterPro" id="IPR036410">
    <property type="entry name" value="HSP_DnaJ_Cys-rich_dom_sf"/>
</dbReference>
<dbReference type="InterPro" id="IPR036869">
    <property type="entry name" value="J_dom_sf"/>
</dbReference>
<dbReference type="NCBIfam" id="TIGR02349">
    <property type="entry name" value="DnaJ_bact"/>
    <property type="match status" value="1"/>
</dbReference>
<dbReference type="NCBIfam" id="NF008035">
    <property type="entry name" value="PRK10767.1"/>
    <property type="match status" value="1"/>
</dbReference>
<dbReference type="PANTHER" id="PTHR43096:SF48">
    <property type="entry name" value="CHAPERONE PROTEIN DNAJ"/>
    <property type="match status" value="1"/>
</dbReference>
<dbReference type="PANTHER" id="PTHR43096">
    <property type="entry name" value="DNAJ HOMOLOG 1, MITOCHONDRIAL-RELATED"/>
    <property type="match status" value="1"/>
</dbReference>
<dbReference type="Pfam" id="PF00226">
    <property type="entry name" value="DnaJ"/>
    <property type="match status" value="1"/>
</dbReference>
<dbReference type="Pfam" id="PF01556">
    <property type="entry name" value="DnaJ_C"/>
    <property type="match status" value="1"/>
</dbReference>
<dbReference type="Pfam" id="PF00684">
    <property type="entry name" value="DnaJ_CXXCXGXG"/>
    <property type="match status" value="1"/>
</dbReference>
<dbReference type="PRINTS" id="PR00625">
    <property type="entry name" value="JDOMAIN"/>
</dbReference>
<dbReference type="SMART" id="SM00271">
    <property type="entry name" value="DnaJ"/>
    <property type="match status" value="1"/>
</dbReference>
<dbReference type="SUPFAM" id="SSF46565">
    <property type="entry name" value="Chaperone J-domain"/>
    <property type="match status" value="1"/>
</dbReference>
<dbReference type="SUPFAM" id="SSF57938">
    <property type="entry name" value="DnaJ/Hsp40 cysteine-rich domain"/>
    <property type="match status" value="1"/>
</dbReference>
<dbReference type="SUPFAM" id="SSF49493">
    <property type="entry name" value="HSP40/DnaJ peptide-binding domain"/>
    <property type="match status" value="2"/>
</dbReference>
<dbReference type="PROSITE" id="PS00636">
    <property type="entry name" value="DNAJ_1"/>
    <property type="match status" value="1"/>
</dbReference>
<dbReference type="PROSITE" id="PS50076">
    <property type="entry name" value="DNAJ_2"/>
    <property type="match status" value="1"/>
</dbReference>
<dbReference type="PROSITE" id="PS51188">
    <property type="entry name" value="ZF_CR"/>
    <property type="match status" value="1"/>
</dbReference>
<reference key="1">
    <citation type="submission" date="2007-04" db="EMBL/GenBank/DDBJ databases">
        <title>Complete sequence of Pseudomonas mendocina ymp.</title>
        <authorList>
            <consortium name="US DOE Joint Genome Institute"/>
            <person name="Copeland A."/>
            <person name="Lucas S."/>
            <person name="Lapidus A."/>
            <person name="Barry K."/>
            <person name="Glavina del Rio T."/>
            <person name="Dalin E."/>
            <person name="Tice H."/>
            <person name="Pitluck S."/>
            <person name="Kiss H."/>
            <person name="Brettin T."/>
            <person name="Detter J.C."/>
            <person name="Bruce D."/>
            <person name="Han C."/>
            <person name="Schmutz J."/>
            <person name="Larimer F."/>
            <person name="Land M."/>
            <person name="Hauser L."/>
            <person name="Kyrpides N."/>
            <person name="Mikhailova N."/>
            <person name="Hersman L."/>
            <person name="Dubois J."/>
            <person name="Maurice P."/>
            <person name="Richardson P."/>
        </authorList>
    </citation>
    <scope>NUCLEOTIDE SEQUENCE [LARGE SCALE GENOMIC DNA]</scope>
    <source>
        <strain>ymp</strain>
    </source>
</reference>
<protein>
    <recommendedName>
        <fullName evidence="1">Chaperone protein DnaJ</fullName>
    </recommendedName>
</protein>
<organism>
    <name type="scientific">Ectopseudomonas mendocina (strain ymp)</name>
    <name type="common">Pseudomonas mendocina</name>
    <dbReference type="NCBI Taxonomy" id="399739"/>
    <lineage>
        <taxon>Bacteria</taxon>
        <taxon>Pseudomonadati</taxon>
        <taxon>Pseudomonadota</taxon>
        <taxon>Gammaproteobacteria</taxon>
        <taxon>Pseudomonadales</taxon>
        <taxon>Pseudomonadaceae</taxon>
        <taxon>Ectopseudomonas</taxon>
    </lineage>
</organism>
<proteinExistence type="inferred from homology"/>
<accession>A4XYF5</accession>
<sequence length="375" mass="40051">MAKRDYYEVLGVERGASEAELKKAYRRLAMKYHPDRNPDDKGAEEKFKEANEAYEVLSDAGKRSAYDQYGHAGVDPQMGGGGGAGFGGANFSDIFGDVFSDFFGGGRGGSRGGAQRGSDLRYTLELDLEEAVRGTTVTIRVPTLVGCKTCDGTGAKKGTSPVTCTTCGGIGQVRMQQGFFSVQQTCPRCHGSGKMITDPCGSCHGQGRVEESKTLSVKVPPGVDTGDRIRLSGEGEAGTHGGPAGDLYVVVNVREHAIFQRDGKHLYCEVPISFADAALGGELEVPTLDGRVKLKIPEGTQTGKLFRLRGKGVAPVRGGAAGDLMCRVAVETPVNLNKRQRELLDEFRKSLQGDDSHSPKASGWFEGVKRFFGDV</sequence>
<evidence type="ECO:0000255" key="1">
    <source>
        <dbReference type="HAMAP-Rule" id="MF_01152"/>
    </source>
</evidence>